<gene>
    <name evidence="1" type="primary">hdfR</name>
    <name type="ordered locus">ECIAI39_3021</name>
</gene>
<accession>B7NU32</accession>
<name>HDFR_ECO7I</name>
<keyword id="KW-0238">DNA-binding</keyword>
<keyword id="KW-0678">Repressor</keyword>
<keyword id="KW-0804">Transcription</keyword>
<keyword id="KW-0805">Transcription regulation</keyword>
<dbReference type="EMBL" id="CU928164">
    <property type="protein sequence ID" value="CAR19140.1"/>
    <property type="molecule type" value="Genomic_DNA"/>
</dbReference>
<dbReference type="RefSeq" id="WP_000379229.1">
    <property type="nucleotide sequence ID" value="NC_011750.1"/>
</dbReference>
<dbReference type="RefSeq" id="YP_002408951.1">
    <property type="nucleotide sequence ID" value="NC_011750.1"/>
</dbReference>
<dbReference type="SMR" id="B7NU32"/>
<dbReference type="STRING" id="585057.ECIAI39_3021"/>
<dbReference type="KEGG" id="ect:ECIAI39_3021"/>
<dbReference type="PATRIC" id="fig|585057.6.peg.3133"/>
<dbReference type="HOGENOM" id="CLU_039613_8_2_6"/>
<dbReference type="Proteomes" id="UP000000749">
    <property type="component" value="Chromosome"/>
</dbReference>
<dbReference type="GO" id="GO:0003677">
    <property type="term" value="F:DNA binding"/>
    <property type="evidence" value="ECO:0007669"/>
    <property type="project" value="UniProtKB-KW"/>
</dbReference>
<dbReference type="GO" id="GO:0003700">
    <property type="term" value="F:DNA-binding transcription factor activity"/>
    <property type="evidence" value="ECO:0007669"/>
    <property type="project" value="UniProtKB-UniRule"/>
</dbReference>
<dbReference type="GO" id="GO:0045892">
    <property type="term" value="P:negative regulation of DNA-templated transcription"/>
    <property type="evidence" value="ECO:0007669"/>
    <property type="project" value="UniProtKB-UniRule"/>
</dbReference>
<dbReference type="FunFam" id="1.10.10.10:FF:000001">
    <property type="entry name" value="LysR family transcriptional regulator"/>
    <property type="match status" value="1"/>
</dbReference>
<dbReference type="Gene3D" id="3.40.190.10">
    <property type="entry name" value="Periplasmic binding protein-like II"/>
    <property type="match status" value="2"/>
</dbReference>
<dbReference type="Gene3D" id="1.10.10.10">
    <property type="entry name" value="Winged helix-like DNA-binding domain superfamily/Winged helix DNA-binding domain"/>
    <property type="match status" value="1"/>
</dbReference>
<dbReference type="HAMAP" id="MF_01233">
    <property type="entry name" value="HTH_type_HdfR"/>
    <property type="match status" value="1"/>
</dbReference>
<dbReference type="InterPro" id="IPR050176">
    <property type="entry name" value="LTTR"/>
</dbReference>
<dbReference type="InterPro" id="IPR005119">
    <property type="entry name" value="LysR_subst-bd"/>
</dbReference>
<dbReference type="InterPro" id="IPR020890">
    <property type="entry name" value="Tscrpt_reg_HTH_HdfR"/>
</dbReference>
<dbReference type="InterPro" id="IPR000847">
    <property type="entry name" value="Tscrpt_reg_HTH_LysR"/>
</dbReference>
<dbReference type="InterPro" id="IPR036388">
    <property type="entry name" value="WH-like_DNA-bd_sf"/>
</dbReference>
<dbReference type="InterPro" id="IPR036390">
    <property type="entry name" value="WH_DNA-bd_sf"/>
</dbReference>
<dbReference type="NCBIfam" id="NF002946">
    <property type="entry name" value="PRK03601.1"/>
    <property type="match status" value="1"/>
</dbReference>
<dbReference type="PANTHER" id="PTHR30579:SF8">
    <property type="entry name" value="HTH-TYPE TRANSCRIPTIONAL REGULATOR HDFR"/>
    <property type="match status" value="1"/>
</dbReference>
<dbReference type="PANTHER" id="PTHR30579">
    <property type="entry name" value="TRANSCRIPTIONAL REGULATOR"/>
    <property type="match status" value="1"/>
</dbReference>
<dbReference type="Pfam" id="PF00126">
    <property type="entry name" value="HTH_1"/>
    <property type="match status" value="1"/>
</dbReference>
<dbReference type="Pfam" id="PF03466">
    <property type="entry name" value="LysR_substrate"/>
    <property type="match status" value="1"/>
</dbReference>
<dbReference type="PRINTS" id="PR00039">
    <property type="entry name" value="HTHLYSR"/>
</dbReference>
<dbReference type="SUPFAM" id="SSF53850">
    <property type="entry name" value="Periplasmic binding protein-like II"/>
    <property type="match status" value="1"/>
</dbReference>
<dbReference type="SUPFAM" id="SSF46785">
    <property type="entry name" value="Winged helix' DNA-binding domain"/>
    <property type="match status" value="1"/>
</dbReference>
<dbReference type="PROSITE" id="PS50931">
    <property type="entry name" value="HTH_LYSR"/>
    <property type="match status" value="1"/>
</dbReference>
<proteinExistence type="inferred from homology"/>
<feature type="chain" id="PRO_1000139664" description="HTH-type transcriptional regulator HdfR">
    <location>
        <begin position="1"/>
        <end position="279"/>
    </location>
</feature>
<feature type="domain" description="HTH lysR-type" evidence="1">
    <location>
        <begin position="1"/>
        <end position="58"/>
    </location>
</feature>
<feature type="DNA-binding region" description="H-T-H motif" evidence="1">
    <location>
        <begin position="18"/>
        <end position="37"/>
    </location>
</feature>
<reference key="1">
    <citation type="journal article" date="2009" name="PLoS Genet.">
        <title>Organised genome dynamics in the Escherichia coli species results in highly diverse adaptive paths.</title>
        <authorList>
            <person name="Touchon M."/>
            <person name="Hoede C."/>
            <person name="Tenaillon O."/>
            <person name="Barbe V."/>
            <person name="Baeriswyl S."/>
            <person name="Bidet P."/>
            <person name="Bingen E."/>
            <person name="Bonacorsi S."/>
            <person name="Bouchier C."/>
            <person name="Bouvet O."/>
            <person name="Calteau A."/>
            <person name="Chiapello H."/>
            <person name="Clermont O."/>
            <person name="Cruveiller S."/>
            <person name="Danchin A."/>
            <person name="Diard M."/>
            <person name="Dossat C."/>
            <person name="Karoui M.E."/>
            <person name="Frapy E."/>
            <person name="Garry L."/>
            <person name="Ghigo J.M."/>
            <person name="Gilles A.M."/>
            <person name="Johnson J."/>
            <person name="Le Bouguenec C."/>
            <person name="Lescat M."/>
            <person name="Mangenot S."/>
            <person name="Martinez-Jehanne V."/>
            <person name="Matic I."/>
            <person name="Nassif X."/>
            <person name="Oztas S."/>
            <person name="Petit M.A."/>
            <person name="Pichon C."/>
            <person name="Rouy Z."/>
            <person name="Ruf C.S."/>
            <person name="Schneider D."/>
            <person name="Tourret J."/>
            <person name="Vacherie B."/>
            <person name="Vallenet D."/>
            <person name="Medigue C."/>
            <person name="Rocha E.P.C."/>
            <person name="Denamur E."/>
        </authorList>
    </citation>
    <scope>NUCLEOTIDE SEQUENCE [LARGE SCALE GENOMIC DNA]</scope>
    <source>
        <strain>IAI39 / ExPEC</strain>
    </source>
</reference>
<evidence type="ECO:0000255" key="1">
    <source>
        <dbReference type="HAMAP-Rule" id="MF_01233"/>
    </source>
</evidence>
<evidence type="ECO:0000305" key="2"/>
<comment type="function">
    <text evidence="1">Negatively regulates the transcription of the flagellar master operon flhDC by binding to the upstream region of the operon.</text>
</comment>
<comment type="similarity">
    <text evidence="2">Belongs to the LysR transcriptional regulatory family.</text>
</comment>
<protein>
    <recommendedName>
        <fullName evidence="1">HTH-type transcriptional regulator HdfR</fullName>
    </recommendedName>
    <alternativeName>
        <fullName evidence="1">H-NS-dependent flhDC regulator</fullName>
    </alternativeName>
</protein>
<organism>
    <name type="scientific">Escherichia coli O7:K1 (strain IAI39 / ExPEC)</name>
    <dbReference type="NCBI Taxonomy" id="585057"/>
    <lineage>
        <taxon>Bacteria</taxon>
        <taxon>Pseudomonadati</taxon>
        <taxon>Pseudomonadota</taxon>
        <taxon>Gammaproteobacteria</taxon>
        <taxon>Enterobacterales</taxon>
        <taxon>Enterobacteriaceae</taxon>
        <taxon>Escherichia</taxon>
    </lineage>
</organism>
<sequence length="279" mass="31746">MDTELLKTFLEVSRTRHFGRAAESLYLTQSAVSFRIRQLENQLGVNLFTRHRNNIRLTAAGEKLLPYAETLMSTWQAARKEVAHTSRHNEFSIGASASLWECMLNQWLGRLYKNQDAHTGLQFEARIAQRQSLVKQLHERQLDLLITTEAPKMDEFSSQLLGYFTLALYTSAPSKLKGDLNYLRLEWGPDFQQHEAGLIGADEVPILTTSSAELAQQQIAMLNGCTWLPVSWARKKGGLHTVVDSTTLSRPLYAIWLQNSDKNALIRDLLKINVLDEVY</sequence>